<reference key="1">
    <citation type="journal article" date="2007" name="Nature">
        <title>Evolution of genes and genomes on the Drosophila phylogeny.</title>
        <authorList>
            <consortium name="Drosophila 12 genomes consortium"/>
        </authorList>
    </citation>
    <scope>NUCLEOTIDE SEQUENCE [LARGE SCALE GENOMIC DNA]</scope>
    <source>
        <strain>Tucson 14030-0811.24</strain>
    </source>
</reference>
<gene>
    <name type="ORF">GK10740</name>
</gene>
<protein>
    <recommendedName>
        <fullName evidence="1">Eukaryotic translation initiation factor 3 subunit K</fullName>
        <shortName evidence="1">eIF3k</shortName>
    </recommendedName>
    <alternativeName>
        <fullName evidence="1">eIF-3 p25</fullName>
    </alternativeName>
</protein>
<proteinExistence type="inferred from homology"/>
<name>EIF3K_DROWI</name>
<accession>B4MIW0</accession>
<evidence type="ECO:0000255" key="1">
    <source>
        <dbReference type="HAMAP-Rule" id="MF_03010"/>
    </source>
</evidence>
<evidence type="ECO:0000255" key="2">
    <source>
        <dbReference type="PROSITE-ProRule" id="PRU01185"/>
    </source>
</evidence>
<sequence>MSHLVKMENGQSQTIQEMLGCIERYNPDHLKILESYVQDQAKNNTYDLEANLAVLKLYQFNPHMLNFEITYTILLKCLTNLPHTDFVMAKCLLLPQQMKDENVQTIIDLADILERADFTLFWQRAEVNRTMFRHITGFHDSIRKFVSHVVGTTFQTIKKDLLKELLGGIEDPTLESWIKRNSWKHQGQDLVVVATQDDKIKTKNITEKIEFDNVGALMAQCL</sequence>
<keyword id="KW-0963">Cytoplasm</keyword>
<keyword id="KW-0396">Initiation factor</keyword>
<keyword id="KW-0648">Protein biosynthesis</keyword>
<keyword id="KW-1185">Reference proteome</keyword>
<organism>
    <name type="scientific">Drosophila willistoni</name>
    <name type="common">Fruit fly</name>
    <dbReference type="NCBI Taxonomy" id="7260"/>
    <lineage>
        <taxon>Eukaryota</taxon>
        <taxon>Metazoa</taxon>
        <taxon>Ecdysozoa</taxon>
        <taxon>Arthropoda</taxon>
        <taxon>Hexapoda</taxon>
        <taxon>Insecta</taxon>
        <taxon>Pterygota</taxon>
        <taxon>Neoptera</taxon>
        <taxon>Endopterygota</taxon>
        <taxon>Diptera</taxon>
        <taxon>Brachycera</taxon>
        <taxon>Muscomorpha</taxon>
        <taxon>Ephydroidea</taxon>
        <taxon>Drosophilidae</taxon>
        <taxon>Drosophila</taxon>
        <taxon>Sophophora</taxon>
    </lineage>
</organism>
<comment type="function">
    <text evidence="1">Component of the eukaryotic translation initiation factor 3 (eIF-3) complex, which is involved in protein synthesis of a specialized repertoire of mRNAs and, together with other initiation factors, stimulates binding of mRNA and methionyl-tRNAi to the 40S ribosome. The eIF-3 complex specifically targets and initiates translation of a subset of mRNAs involved in cell proliferation.</text>
</comment>
<comment type="subunit">
    <text evidence="1">Component of the eukaryotic translation initiation factor 3 (eIF-3) complex. The eIF-3 complex interacts with pix.</text>
</comment>
<comment type="subcellular location">
    <subcellularLocation>
        <location evidence="1">Cytoplasm</location>
    </subcellularLocation>
</comment>
<comment type="similarity">
    <text evidence="1">Belongs to the eIF-3 subunit K family.</text>
</comment>
<feature type="chain" id="PRO_0000365048" description="Eukaryotic translation initiation factor 3 subunit K">
    <location>
        <begin position="1"/>
        <end position="222"/>
    </location>
</feature>
<feature type="domain" description="PCI" evidence="2">
    <location>
        <begin position="46"/>
        <end position="208"/>
    </location>
</feature>
<dbReference type="EMBL" id="CH963719">
    <property type="protein sequence ID" value="EDW72049.1"/>
    <property type="molecule type" value="Genomic_DNA"/>
</dbReference>
<dbReference type="SMR" id="B4MIW0"/>
<dbReference type="STRING" id="7260.B4MIW0"/>
<dbReference type="EnsemblMetazoa" id="FBtr0241391">
    <property type="protein sequence ID" value="FBpp0239883"/>
    <property type="gene ID" value="FBgn0212752"/>
</dbReference>
<dbReference type="EnsemblMetazoa" id="XM_002061027.4">
    <property type="protein sequence ID" value="XP_002061063.1"/>
    <property type="gene ID" value="LOC6637947"/>
</dbReference>
<dbReference type="GeneID" id="6637947"/>
<dbReference type="KEGG" id="dwi:6637947"/>
<dbReference type="CTD" id="27335"/>
<dbReference type="eggNOG" id="KOG3252">
    <property type="taxonomic scope" value="Eukaryota"/>
</dbReference>
<dbReference type="HOGENOM" id="CLU_076723_1_0_1"/>
<dbReference type="OMA" id="WKHQGQG"/>
<dbReference type="OrthoDB" id="337745at2759"/>
<dbReference type="PhylomeDB" id="B4MIW0"/>
<dbReference type="Proteomes" id="UP000007798">
    <property type="component" value="Unassembled WGS sequence"/>
</dbReference>
<dbReference type="GO" id="GO:0016282">
    <property type="term" value="C:eukaryotic 43S preinitiation complex"/>
    <property type="evidence" value="ECO:0007669"/>
    <property type="project" value="UniProtKB-UniRule"/>
</dbReference>
<dbReference type="GO" id="GO:0033290">
    <property type="term" value="C:eukaryotic 48S preinitiation complex"/>
    <property type="evidence" value="ECO:0007669"/>
    <property type="project" value="UniProtKB-UniRule"/>
</dbReference>
<dbReference type="GO" id="GO:0005852">
    <property type="term" value="C:eukaryotic translation initiation factor 3 complex"/>
    <property type="evidence" value="ECO:0007669"/>
    <property type="project" value="UniProtKB-UniRule"/>
</dbReference>
<dbReference type="GO" id="GO:0043022">
    <property type="term" value="F:ribosome binding"/>
    <property type="evidence" value="ECO:0007669"/>
    <property type="project" value="InterPro"/>
</dbReference>
<dbReference type="GO" id="GO:0003723">
    <property type="term" value="F:RNA binding"/>
    <property type="evidence" value="ECO:0007669"/>
    <property type="project" value="UniProtKB-UniRule"/>
</dbReference>
<dbReference type="GO" id="GO:0003743">
    <property type="term" value="F:translation initiation factor activity"/>
    <property type="evidence" value="ECO:0007669"/>
    <property type="project" value="UniProtKB-UniRule"/>
</dbReference>
<dbReference type="GO" id="GO:0001732">
    <property type="term" value="P:formation of cytoplasmic translation initiation complex"/>
    <property type="evidence" value="ECO:0007669"/>
    <property type="project" value="UniProtKB-UniRule"/>
</dbReference>
<dbReference type="GO" id="GO:0006446">
    <property type="term" value="P:regulation of translational initiation"/>
    <property type="evidence" value="ECO:0007669"/>
    <property type="project" value="InterPro"/>
</dbReference>
<dbReference type="FunFam" id="1.10.10.10:FF:000212">
    <property type="entry name" value="Eukaryotic translation initiation factor 3 subunit K"/>
    <property type="match status" value="1"/>
</dbReference>
<dbReference type="FunFam" id="1.25.40.250:FF:000001">
    <property type="entry name" value="Eukaryotic translation initiation factor 3 subunit K"/>
    <property type="match status" value="1"/>
</dbReference>
<dbReference type="Gene3D" id="1.25.40.250">
    <property type="entry name" value="ARM repeat, domain 1"/>
    <property type="match status" value="1"/>
</dbReference>
<dbReference type="Gene3D" id="1.10.10.10">
    <property type="entry name" value="Winged helix-like DNA-binding domain superfamily/Winged helix DNA-binding domain"/>
    <property type="match status" value="1"/>
</dbReference>
<dbReference type="HAMAP" id="MF_03010">
    <property type="entry name" value="eIF3k"/>
    <property type="match status" value="1"/>
</dbReference>
<dbReference type="InterPro" id="IPR016024">
    <property type="entry name" value="ARM-type_fold"/>
</dbReference>
<dbReference type="InterPro" id="IPR033464">
    <property type="entry name" value="CSN8_PSD8_EIF3K"/>
</dbReference>
<dbReference type="InterPro" id="IPR009374">
    <property type="entry name" value="eIF3k"/>
</dbReference>
<dbReference type="InterPro" id="IPR000717">
    <property type="entry name" value="PCI_dom"/>
</dbReference>
<dbReference type="InterPro" id="IPR016020">
    <property type="entry name" value="Transl_init_fac_sub12_N_euk"/>
</dbReference>
<dbReference type="InterPro" id="IPR036388">
    <property type="entry name" value="WH-like_DNA-bd_sf"/>
</dbReference>
<dbReference type="InterPro" id="IPR036390">
    <property type="entry name" value="WH_DNA-bd_sf"/>
</dbReference>
<dbReference type="PANTHER" id="PTHR13022">
    <property type="entry name" value="EUKARYOTIC TRANSLATION INITIATION FACTOR 3 SUBUNIT 11"/>
    <property type="match status" value="1"/>
</dbReference>
<dbReference type="PANTHER" id="PTHR13022:SF0">
    <property type="entry name" value="EUKARYOTIC TRANSLATION INITIATION FACTOR 3 SUBUNIT K"/>
    <property type="match status" value="1"/>
</dbReference>
<dbReference type="Pfam" id="PF10075">
    <property type="entry name" value="CSN8_PSD8_EIF3K"/>
    <property type="match status" value="1"/>
</dbReference>
<dbReference type="SUPFAM" id="SSF48371">
    <property type="entry name" value="ARM repeat"/>
    <property type="match status" value="1"/>
</dbReference>
<dbReference type="SUPFAM" id="SSF46785">
    <property type="entry name" value="Winged helix' DNA-binding domain"/>
    <property type="match status" value="1"/>
</dbReference>
<dbReference type="PROSITE" id="PS50250">
    <property type="entry name" value="PCI"/>
    <property type="match status" value="1"/>
</dbReference>